<protein>
    <recommendedName>
        <fullName evidence="1">Glucosamine-6-phosphate deaminase</fullName>
        <ecNumber evidence="1">3.5.99.6</ecNumber>
    </recommendedName>
    <alternativeName>
        <fullName evidence="1">GlcN6P deaminase</fullName>
        <shortName evidence="1">GNPDA</shortName>
    </alternativeName>
    <alternativeName>
        <fullName evidence="1">Glucosamine-6-phosphate isomerase</fullName>
    </alternativeName>
</protein>
<comment type="function">
    <text evidence="1">Catalyzes the reversible isomerization-deamination of glucosamine 6-phosphate (GlcN6P) to form fructose 6-phosphate (Fru6P) and ammonium ion.</text>
</comment>
<comment type="catalytic activity">
    <reaction evidence="1">
        <text>alpha-D-glucosamine 6-phosphate + H2O = beta-D-fructose 6-phosphate + NH4(+)</text>
        <dbReference type="Rhea" id="RHEA:12172"/>
        <dbReference type="ChEBI" id="CHEBI:15377"/>
        <dbReference type="ChEBI" id="CHEBI:28938"/>
        <dbReference type="ChEBI" id="CHEBI:57634"/>
        <dbReference type="ChEBI" id="CHEBI:75989"/>
        <dbReference type="EC" id="3.5.99.6"/>
    </reaction>
</comment>
<comment type="activity regulation">
    <text evidence="1">Allosterically activated by N-acetylglucosamine 6-phosphate (GlcNAc6P).</text>
</comment>
<comment type="pathway">
    <text evidence="1">Amino-sugar metabolism; N-acetylneuraminate degradation; D-fructose 6-phosphate from N-acetylneuraminate: step 5/5.</text>
</comment>
<comment type="subunit">
    <text evidence="1">Homohexamer.</text>
</comment>
<comment type="similarity">
    <text evidence="1">Belongs to the glucosamine/galactosamine-6-phosphate isomerase family. NagB subfamily.</text>
</comment>
<feature type="chain" id="PRO_1000139779" description="Glucosamine-6-phosphate deaminase">
    <location>
        <begin position="1"/>
        <end position="266"/>
    </location>
</feature>
<feature type="active site" description="Proton acceptor; for enolization step" evidence="1">
    <location>
        <position position="72"/>
    </location>
</feature>
<feature type="active site" description="For ring-opening step" evidence="1">
    <location>
        <position position="141"/>
    </location>
</feature>
<feature type="active site" description="Proton acceptor; for ring-opening step" evidence="1">
    <location>
        <position position="143"/>
    </location>
</feature>
<feature type="active site" description="For ring-opening step" evidence="1">
    <location>
        <position position="148"/>
    </location>
</feature>
<feature type="site" description="Part of the allosteric site" evidence="1">
    <location>
        <position position="151"/>
    </location>
</feature>
<feature type="site" description="Part of the allosteric site" evidence="1">
    <location>
        <position position="158"/>
    </location>
</feature>
<feature type="site" description="Part of the allosteric site" evidence="1">
    <location>
        <position position="160"/>
    </location>
</feature>
<feature type="site" description="Part of the allosteric site" evidence="1">
    <location>
        <position position="161"/>
    </location>
</feature>
<feature type="site" description="Part of the allosteric site" evidence="1">
    <location>
        <position position="254"/>
    </location>
</feature>
<dbReference type="EC" id="3.5.99.6" evidence="1"/>
<dbReference type="EMBL" id="CP000964">
    <property type="protein sequence ID" value="ACI10519.1"/>
    <property type="molecule type" value="Genomic_DNA"/>
</dbReference>
<dbReference type="SMR" id="B5XZG9"/>
<dbReference type="KEGG" id="kpe:KPK_3874"/>
<dbReference type="HOGENOM" id="CLU_049611_0_1_6"/>
<dbReference type="UniPathway" id="UPA00629">
    <property type="reaction ID" value="UER00684"/>
</dbReference>
<dbReference type="Proteomes" id="UP000001734">
    <property type="component" value="Chromosome"/>
</dbReference>
<dbReference type="GO" id="GO:0005737">
    <property type="term" value="C:cytoplasm"/>
    <property type="evidence" value="ECO:0007669"/>
    <property type="project" value="TreeGrafter"/>
</dbReference>
<dbReference type="GO" id="GO:0004342">
    <property type="term" value="F:glucosamine-6-phosphate deaminase activity"/>
    <property type="evidence" value="ECO:0007669"/>
    <property type="project" value="UniProtKB-UniRule"/>
</dbReference>
<dbReference type="GO" id="GO:0042802">
    <property type="term" value="F:identical protein binding"/>
    <property type="evidence" value="ECO:0007669"/>
    <property type="project" value="TreeGrafter"/>
</dbReference>
<dbReference type="GO" id="GO:0005975">
    <property type="term" value="P:carbohydrate metabolic process"/>
    <property type="evidence" value="ECO:0007669"/>
    <property type="project" value="InterPro"/>
</dbReference>
<dbReference type="GO" id="GO:0006043">
    <property type="term" value="P:glucosamine catabolic process"/>
    <property type="evidence" value="ECO:0007669"/>
    <property type="project" value="TreeGrafter"/>
</dbReference>
<dbReference type="GO" id="GO:0006046">
    <property type="term" value="P:N-acetylglucosamine catabolic process"/>
    <property type="evidence" value="ECO:0007669"/>
    <property type="project" value="TreeGrafter"/>
</dbReference>
<dbReference type="GO" id="GO:0019262">
    <property type="term" value="P:N-acetylneuraminate catabolic process"/>
    <property type="evidence" value="ECO:0007669"/>
    <property type="project" value="UniProtKB-UniRule"/>
</dbReference>
<dbReference type="CDD" id="cd01399">
    <property type="entry name" value="GlcN6P_deaminase"/>
    <property type="match status" value="1"/>
</dbReference>
<dbReference type="FunFam" id="3.40.50.1360:FF:000002">
    <property type="entry name" value="Glucosamine-6-phosphate deaminase"/>
    <property type="match status" value="1"/>
</dbReference>
<dbReference type="Gene3D" id="3.40.50.1360">
    <property type="match status" value="1"/>
</dbReference>
<dbReference type="HAMAP" id="MF_01241">
    <property type="entry name" value="GlcN6P_deamin"/>
    <property type="match status" value="1"/>
</dbReference>
<dbReference type="InterPro" id="IPR006148">
    <property type="entry name" value="Glc/Gal-6P_isomerase"/>
</dbReference>
<dbReference type="InterPro" id="IPR004547">
    <property type="entry name" value="Glucosamine6P_isomerase"/>
</dbReference>
<dbReference type="InterPro" id="IPR018321">
    <property type="entry name" value="Glucosamine6P_isomerase_CS"/>
</dbReference>
<dbReference type="InterPro" id="IPR037171">
    <property type="entry name" value="NagB/RpiA_transferase-like"/>
</dbReference>
<dbReference type="NCBIfam" id="TIGR00502">
    <property type="entry name" value="nagB"/>
    <property type="match status" value="1"/>
</dbReference>
<dbReference type="NCBIfam" id="NF001685">
    <property type="entry name" value="PRK00443.1-5"/>
    <property type="match status" value="1"/>
</dbReference>
<dbReference type="PANTHER" id="PTHR11280">
    <property type="entry name" value="GLUCOSAMINE-6-PHOSPHATE ISOMERASE"/>
    <property type="match status" value="1"/>
</dbReference>
<dbReference type="PANTHER" id="PTHR11280:SF5">
    <property type="entry name" value="GLUCOSAMINE-6-PHOSPHATE ISOMERASE"/>
    <property type="match status" value="1"/>
</dbReference>
<dbReference type="Pfam" id="PF01182">
    <property type="entry name" value="Glucosamine_iso"/>
    <property type="match status" value="1"/>
</dbReference>
<dbReference type="SUPFAM" id="SSF100950">
    <property type="entry name" value="NagB/RpiA/CoA transferase-like"/>
    <property type="match status" value="1"/>
</dbReference>
<dbReference type="PROSITE" id="PS01161">
    <property type="entry name" value="GLC_GALNAC_ISOMERASE"/>
    <property type="match status" value="1"/>
</dbReference>
<accession>B5XZG9</accession>
<proteinExistence type="inferred from homology"/>
<keyword id="KW-0021">Allosteric enzyme</keyword>
<keyword id="KW-0119">Carbohydrate metabolism</keyword>
<keyword id="KW-0378">Hydrolase</keyword>
<reference key="1">
    <citation type="journal article" date="2008" name="PLoS Genet.">
        <title>Complete genome sequence of the N2-fixing broad host range endophyte Klebsiella pneumoniae 342 and virulence predictions verified in mice.</title>
        <authorList>
            <person name="Fouts D.E."/>
            <person name="Tyler H.L."/>
            <person name="DeBoy R.T."/>
            <person name="Daugherty S."/>
            <person name="Ren Q."/>
            <person name="Badger J.H."/>
            <person name="Durkin A.S."/>
            <person name="Huot H."/>
            <person name="Shrivastava S."/>
            <person name="Kothari S."/>
            <person name="Dodson R.J."/>
            <person name="Mohamoud Y."/>
            <person name="Khouri H."/>
            <person name="Roesch L.F.W."/>
            <person name="Krogfelt K.A."/>
            <person name="Struve C."/>
            <person name="Triplett E.W."/>
            <person name="Methe B.A."/>
        </authorList>
    </citation>
    <scope>NUCLEOTIDE SEQUENCE [LARGE SCALE GENOMIC DNA]</scope>
    <source>
        <strain>342</strain>
    </source>
</reference>
<sequence length="266" mass="29670">MRLIPLVTAEQVGKWAARHIVNRINAFKPTADRPFVLGLPTGGTPLTAYKALVEMHKAGQVSFKHVVTFNMDEYVGLPKEHPESYHSFMHRNFFDHVDIPAENINLLNGNAPDIDAECRRYEEKIRSYGKIHLFMGGVGNDGHIAFNEPASSLASRTRIKTLTHDTRVANSRFFDGDVDLVPKYALTVGVGTLLDAEEVMILVLGHQKALALQAAVEGNVNHMWTITCLQLHPKAVIVCDEPSTMELKVKTLKYFNELEAENIKGL</sequence>
<evidence type="ECO:0000255" key="1">
    <source>
        <dbReference type="HAMAP-Rule" id="MF_01241"/>
    </source>
</evidence>
<organism>
    <name type="scientific">Klebsiella pneumoniae (strain 342)</name>
    <dbReference type="NCBI Taxonomy" id="507522"/>
    <lineage>
        <taxon>Bacteria</taxon>
        <taxon>Pseudomonadati</taxon>
        <taxon>Pseudomonadota</taxon>
        <taxon>Gammaproteobacteria</taxon>
        <taxon>Enterobacterales</taxon>
        <taxon>Enterobacteriaceae</taxon>
        <taxon>Klebsiella/Raoultella group</taxon>
        <taxon>Klebsiella</taxon>
        <taxon>Klebsiella pneumoniae complex</taxon>
    </lineage>
</organism>
<name>NAGB_KLEP3</name>
<gene>
    <name evidence="1" type="primary">nagB</name>
    <name type="ordered locus">KPK_3874</name>
</gene>